<reference key="1">
    <citation type="journal article" date="2007" name="Plant Cell">
        <title>Dothideomycete-plant interactions illuminated by genome sequencing and EST analysis of the wheat pathogen Stagonospora nodorum.</title>
        <authorList>
            <person name="Hane J.K."/>
            <person name="Lowe R.G.T."/>
            <person name="Solomon P.S."/>
            <person name="Tan K.-C."/>
            <person name="Schoch C.L."/>
            <person name="Spatafora J.W."/>
            <person name="Crous P.W."/>
            <person name="Kodira C.D."/>
            <person name="Birren B.W."/>
            <person name="Galagan J.E."/>
            <person name="Torriani S.F.F."/>
            <person name="McDonald B.A."/>
            <person name="Oliver R.P."/>
        </authorList>
    </citation>
    <scope>NUCLEOTIDE SEQUENCE [LARGE SCALE GENOMIC DNA]</scope>
    <source>
        <strain>SN15 / ATCC MYA-4574 / FGSC 10173</strain>
    </source>
</reference>
<reference key="2">
    <citation type="journal article" date="2020" name="ACS Chem. Biol.">
        <title>Genomics-driven discovery of phytotoxic cytochalasans involved in the virulence of the wheat pathogen Parastagonospora nodorum.</title>
        <authorList>
            <person name="Li H."/>
            <person name="Wei H."/>
            <person name="Hu J."/>
            <person name="Lacey E."/>
            <person name="Sobolev A.N."/>
            <person name="Stubbs K.A."/>
            <person name="Solomon P.S."/>
            <person name="Chooi Y.H."/>
        </authorList>
    </citation>
    <scope>FUNCTION</scope>
    <scope>PATHWAY</scope>
</reference>
<protein>
    <recommendedName>
        <fullName evidence="5">FAD-linked oxidoreductase phmC</fullName>
        <ecNumber evidence="7">1.-.-.-</ecNumber>
    </recommendedName>
    <alternativeName>
        <fullName evidence="5">Phomacin biosynthesis cluster protein C</fullName>
    </alternativeName>
</protein>
<dbReference type="EC" id="1.-.-.-" evidence="7"/>
<dbReference type="EMBL" id="CH445325">
    <property type="protein sequence ID" value="EAT91804.2"/>
    <property type="molecule type" value="Genomic_DNA"/>
</dbReference>
<dbReference type="RefSeq" id="XP_001790999.1">
    <property type="nucleotide sequence ID" value="XM_001790947.1"/>
</dbReference>
<dbReference type="SMR" id="Q0V6Q5"/>
<dbReference type="STRING" id="321614.Q0V6Q5"/>
<dbReference type="GlyCosmos" id="Q0V6Q5">
    <property type="glycosylation" value="4 sites, No reported glycans"/>
</dbReference>
<dbReference type="GeneID" id="5967850"/>
<dbReference type="KEGG" id="pno:SNOG_00309"/>
<dbReference type="VEuPathDB" id="FungiDB:JI435_425970"/>
<dbReference type="InParanoid" id="Q0V6Q5"/>
<dbReference type="Proteomes" id="UP000001055">
    <property type="component" value="Unassembled WGS sequence"/>
</dbReference>
<dbReference type="GO" id="GO:0071949">
    <property type="term" value="F:FAD binding"/>
    <property type="evidence" value="ECO:0007669"/>
    <property type="project" value="InterPro"/>
</dbReference>
<dbReference type="GO" id="GO:0016491">
    <property type="term" value="F:oxidoreductase activity"/>
    <property type="evidence" value="ECO:0000318"/>
    <property type="project" value="GO_Central"/>
</dbReference>
<dbReference type="Gene3D" id="3.30.465.10">
    <property type="match status" value="1"/>
</dbReference>
<dbReference type="InterPro" id="IPR016166">
    <property type="entry name" value="FAD-bd_PCMH"/>
</dbReference>
<dbReference type="InterPro" id="IPR036318">
    <property type="entry name" value="FAD-bd_PCMH-like_sf"/>
</dbReference>
<dbReference type="InterPro" id="IPR016169">
    <property type="entry name" value="FAD-bd_PCMH_sub2"/>
</dbReference>
<dbReference type="InterPro" id="IPR050432">
    <property type="entry name" value="FAD-linked_Oxidoreductases_BP"/>
</dbReference>
<dbReference type="InterPro" id="IPR006094">
    <property type="entry name" value="Oxid_FAD_bind_N"/>
</dbReference>
<dbReference type="PANTHER" id="PTHR13878:SF91">
    <property type="entry name" value="FAD BINDING DOMAIN PROTEIN (AFU_ORTHOLOGUE AFUA_6G12070)-RELATED"/>
    <property type="match status" value="1"/>
</dbReference>
<dbReference type="PANTHER" id="PTHR13878">
    <property type="entry name" value="GULONOLACTONE OXIDASE"/>
    <property type="match status" value="1"/>
</dbReference>
<dbReference type="Pfam" id="PF01565">
    <property type="entry name" value="FAD_binding_4"/>
    <property type="match status" value="1"/>
</dbReference>
<dbReference type="SUPFAM" id="SSF56176">
    <property type="entry name" value="FAD-binding/transporter-associated domain-like"/>
    <property type="match status" value="1"/>
</dbReference>
<dbReference type="PROSITE" id="PS51387">
    <property type="entry name" value="FAD_PCMH"/>
    <property type="match status" value="1"/>
</dbReference>
<feature type="signal peptide" evidence="1">
    <location>
        <begin position="1"/>
        <end position="19"/>
    </location>
</feature>
<feature type="chain" id="PRO_5004178710" description="FAD-linked oxidoreductase phmC" evidence="1">
    <location>
        <begin position="20"/>
        <end position="439"/>
    </location>
</feature>
<feature type="domain" description="FAD-binding PCMH-type" evidence="3">
    <location>
        <begin position="89"/>
        <end position="272"/>
    </location>
</feature>
<feature type="glycosylation site" description="N-linked (GlcNAc...) asparagine" evidence="2">
    <location>
        <position position="29"/>
    </location>
</feature>
<feature type="glycosylation site" description="N-linked (GlcNAc...) asparagine" evidence="2">
    <location>
        <position position="84"/>
    </location>
</feature>
<feature type="glycosylation site" description="N-linked (GlcNAc...) asparagine" evidence="2">
    <location>
        <position position="285"/>
    </location>
</feature>
<feature type="glycosylation site" description="N-linked (GlcNAc...) asparagine" evidence="2">
    <location>
        <position position="300"/>
    </location>
</feature>
<proteinExistence type="inferred from homology"/>
<accession>Q0V6Q5</accession>
<comment type="function">
    <text evidence="4 7">FAD-linked oxidoreductase; part of the gene cluster that mediates the biosynthesis of the mycotoxins phomacins, leucine-derived cytochalasans with potent actin polymerization-inhibitory activities and monocot-specific antigerminative activities (PubMed:31815421). The first step in the pathway is catalyzed by the hybrid PKS-NRPS phmA, assisted by the enoyl reductase phmE, that are responsible for fusion of the leucine precursor and the polyketide backbone to produce a 2-pyrrolidone intermediate (PubMed:31815421). The polyketide synthase module (PKS) of phmA is responsible for the synthesis of the polyketide backbone and the downstream nonribosomal peptide synthetase (NRPS) amidates the carboxyl end of the polyketide with the leucine precursor (PubMed:31815421). Because phmA lacks a designated enoylreductase (ER) domain, the required activity is provided the enoyl reductase phmE (PubMed:31815421). Reduction by the hydrolyase phmG, followed by dehydration and intra-molecular Diels-Alder cyclization by the Diels-Alderase phmD then yield the required isoindolone-fused macrocycle (Probable). A number of oxidative steps catalyzed by the tailoring cytochrome P450 monooxygenase phmB, the FAD-linked oxidoreductase phmC and the short-chain dehydrogenase/reductase phmF, are further required to afford the final products, phomacin D and phomacin E (PubMed:31815421).</text>
</comment>
<comment type="cofactor">
    <cofactor evidence="6">
        <name>FAD</name>
        <dbReference type="ChEBI" id="CHEBI:57692"/>
    </cofactor>
</comment>
<comment type="pathway">
    <text evidence="7">Mycotoxin biosynthesis.</text>
</comment>
<comment type="similarity">
    <text evidence="6">Belongs to the oxygen-dependent FAD-linked oxidoreductase family.</text>
</comment>
<evidence type="ECO:0000255" key="1"/>
<evidence type="ECO:0000255" key="2">
    <source>
        <dbReference type="PROSITE-ProRule" id="PRU00498"/>
    </source>
</evidence>
<evidence type="ECO:0000255" key="3">
    <source>
        <dbReference type="PROSITE-ProRule" id="PRU00718"/>
    </source>
</evidence>
<evidence type="ECO:0000269" key="4">
    <source>
    </source>
</evidence>
<evidence type="ECO:0000303" key="5">
    <source>
    </source>
</evidence>
<evidence type="ECO:0000305" key="6"/>
<evidence type="ECO:0000305" key="7">
    <source>
    </source>
</evidence>
<gene>
    <name evidence="5" type="primary">phmC</name>
    <name type="ORF">SNOG_00309</name>
</gene>
<name>PHMC_PHANO</name>
<organism>
    <name type="scientific">Phaeosphaeria nodorum (strain SN15 / ATCC MYA-4574 / FGSC 10173)</name>
    <name type="common">Glume blotch fungus</name>
    <name type="synonym">Parastagonospora nodorum</name>
    <dbReference type="NCBI Taxonomy" id="321614"/>
    <lineage>
        <taxon>Eukaryota</taxon>
        <taxon>Fungi</taxon>
        <taxon>Dikarya</taxon>
        <taxon>Ascomycota</taxon>
        <taxon>Pezizomycotina</taxon>
        <taxon>Dothideomycetes</taxon>
        <taxon>Pleosporomycetidae</taxon>
        <taxon>Pleosporales</taxon>
        <taxon>Pleosporineae</taxon>
        <taxon>Phaeosphaeriaceae</taxon>
        <taxon>Parastagonospora</taxon>
    </lineage>
</organism>
<sequence length="439" mass="46554">MLSSILLTIFCAFLSSTGAANVADWNSLNKTLKGQLKGATPLASPCFSQVNAYEETQSEDCATAIGQQCLLDSSDPSSIKAYANVSCNQGSVPSYYIQVKSAEEVKKAFAFAARTQTAISIKNSGHDYNGRSSGAGSLSLWTRKLQELKYEPSFVPQQCGRQAGVAAITTGAGINFDQVYTFAHEKGVTYLGGSGPTVGASGGWVMTGGHGVLSRVYGLGVDRVLEFEVVTTDGVTRIANACQNQDLFWALRGGGGGTFGVILSTTTRVEPKLSIAVAFIALPANTSQQVLAEWTSLAINSTIKWAADGWGGFQGSGITLLGTPLLSLAQAESSMAELAQFAKRNGGSVAVELLSDFYDMYTKYYITNVQAGGSALFSHNWMIPSRAYANAQGRKQLQDHMDWMSSVGLNPGFLATTPYVYSGVAKQCGTFDAFGWMGL</sequence>
<keyword id="KW-0274">FAD</keyword>
<keyword id="KW-0285">Flavoprotein</keyword>
<keyword id="KW-0325">Glycoprotein</keyword>
<keyword id="KW-0560">Oxidoreductase</keyword>
<keyword id="KW-0732">Signal</keyword>
<keyword id="KW-0843">Virulence</keyword>